<proteinExistence type="inferred from homology"/>
<reference key="1">
    <citation type="journal article" date="1985" name="EMBO J.">
        <title>The maize cytochrome c oxidase subunit I gene: sequence, expression and rearrangement in cytoplasmic male sterile plants.</title>
        <authorList>
            <person name="Isaac P.G."/>
            <person name="Jones V.P."/>
            <person name="Leaver C.J."/>
        </authorList>
    </citation>
    <scope>NUCLEOTIDE SEQUENCE [GENOMIC DNA]</scope>
</reference>
<name>COX1_MAIZE</name>
<comment type="function">
    <text evidence="2">Component of the cytochrome c oxidase, the last enzyme in the mitochondrial electron transport chain which drives oxidative phosphorylation. The respiratory chain contains 3 multisubunit complexes succinate dehydrogenase (complex II, CII), ubiquinol-cytochrome c oxidoreductase (cytochrome b-c1 complex, complex III, CIII) and cytochrome c oxidase (complex IV, CIV), that cooperate to transfer electrons derived from NADH and succinate to molecular oxygen, creating an electrochemical gradient over the inner membrane that drives transmembrane transport and the ATP synthase. Cytochrome c oxidase is the component of the respiratory chain that catalyzes the reduction of oxygen to water. Electrons originating from reduced cytochrome c in the intermembrane space (IMS) are transferred via the dinuclear copper A center (CU(A)) of subunit 2 and heme A of subunit 1 to the active site in subunit 1, a binuclear center (BNC) formed by heme A3 and copper B (CU(B)). The BNC reduces molecular oxygen to 2 water molecules using 4 electrons from cytochrome c in the IMS and 4 protons from the mitochondrial matrix.</text>
</comment>
<comment type="catalytic activity">
    <reaction evidence="2">
        <text>4 Fe(II)-[cytochrome c] + O2 + 8 H(+)(in) = 4 Fe(III)-[cytochrome c] + 2 H2O + 4 H(+)(out)</text>
        <dbReference type="Rhea" id="RHEA:11436"/>
        <dbReference type="Rhea" id="RHEA-COMP:10350"/>
        <dbReference type="Rhea" id="RHEA-COMP:14399"/>
        <dbReference type="ChEBI" id="CHEBI:15377"/>
        <dbReference type="ChEBI" id="CHEBI:15378"/>
        <dbReference type="ChEBI" id="CHEBI:15379"/>
        <dbReference type="ChEBI" id="CHEBI:29033"/>
        <dbReference type="ChEBI" id="CHEBI:29034"/>
        <dbReference type="EC" id="7.1.1.9"/>
    </reaction>
    <physiologicalReaction direction="left-to-right" evidence="2">
        <dbReference type="Rhea" id="RHEA:11437"/>
    </physiologicalReaction>
</comment>
<comment type="cofactor">
    <cofactor evidence="2">
        <name>heme</name>
        <dbReference type="ChEBI" id="CHEBI:30413"/>
    </cofactor>
    <text evidence="2">Binds 2 heme A groups non-covalently per subunit.</text>
</comment>
<comment type="cofactor">
    <cofactor evidence="2">
        <name>Cu cation</name>
        <dbReference type="ChEBI" id="CHEBI:23378"/>
    </cofactor>
    <text evidence="2">Binds a copper B center.</text>
</comment>
<comment type="pathway">
    <text evidence="2">Energy metabolism; oxidative phosphorylation.</text>
</comment>
<comment type="subunit">
    <text evidence="2">Component of the cytochrome c oxidase (complex IV, CIV), a multisubunit enzyme composed of a catalytic core of 3 subunits and several supernumerary subunits. The complex exists as a monomer or a dimer and forms supercomplexes (SCs) in the inner mitochondrial membrane with ubiquinol-cytochrome c oxidoreductase (cytochrome b-c1 complex, complex III, CIII).</text>
</comment>
<comment type="subcellular location">
    <subcellularLocation>
        <location evidence="2">Mitochondrion inner membrane</location>
        <topology evidence="2">Multi-pass membrane protein</topology>
    </subcellularLocation>
</comment>
<comment type="similarity">
    <text evidence="4">Belongs to the heme-copper respiratory oxidase family.</text>
</comment>
<dbReference type="EC" id="7.1.1.9"/>
<dbReference type="EMBL" id="X02660">
    <property type="protein sequence ID" value="CAA26496.1"/>
    <property type="molecule type" value="Genomic_DNA"/>
</dbReference>
<dbReference type="PIR" id="A22840">
    <property type="entry name" value="ODZM1"/>
</dbReference>
<dbReference type="SMR" id="P08742"/>
<dbReference type="PaxDb" id="4577-GRMZM2G450825_P01"/>
<dbReference type="MaizeGDB" id="69214"/>
<dbReference type="eggNOG" id="KOG4769">
    <property type="taxonomic scope" value="Eukaryota"/>
</dbReference>
<dbReference type="HOGENOM" id="CLU_011899_7_3_1"/>
<dbReference type="OrthoDB" id="728657at2759"/>
<dbReference type="UniPathway" id="UPA00705"/>
<dbReference type="GO" id="GO:0005743">
    <property type="term" value="C:mitochondrial inner membrane"/>
    <property type="evidence" value="ECO:0007669"/>
    <property type="project" value="UniProtKB-SubCell"/>
</dbReference>
<dbReference type="GO" id="GO:0045277">
    <property type="term" value="C:respiratory chain complex IV"/>
    <property type="evidence" value="ECO:0000318"/>
    <property type="project" value="GO_Central"/>
</dbReference>
<dbReference type="GO" id="GO:0004129">
    <property type="term" value="F:cytochrome-c oxidase activity"/>
    <property type="evidence" value="ECO:0007669"/>
    <property type="project" value="UniProtKB-EC"/>
</dbReference>
<dbReference type="GO" id="GO:0020037">
    <property type="term" value="F:heme binding"/>
    <property type="evidence" value="ECO:0007669"/>
    <property type="project" value="InterPro"/>
</dbReference>
<dbReference type="GO" id="GO:0046872">
    <property type="term" value="F:metal ion binding"/>
    <property type="evidence" value="ECO:0007669"/>
    <property type="project" value="UniProtKB-KW"/>
</dbReference>
<dbReference type="GO" id="GO:0009060">
    <property type="term" value="P:aerobic respiration"/>
    <property type="evidence" value="ECO:0000318"/>
    <property type="project" value="GO_Central"/>
</dbReference>
<dbReference type="GO" id="GO:0015990">
    <property type="term" value="P:electron transport coupled proton transport"/>
    <property type="evidence" value="ECO:0007669"/>
    <property type="project" value="InterPro"/>
</dbReference>
<dbReference type="GO" id="GO:0006119">
    <property type="term" value="P:oxidative phosphorylation"/>
    <property type="evidence" value="ECO:0007669"/>
    <property type="project" value="UniProtKB-UniPathway"/>
</dbReference>
<dbReference type="GO" id="GO:0022904">
    <property type="term" value="P:respiratory electron transport chain"/>
    <property type="evidence" value="ECO:0000318"/>
    <property type="project" value="GO_Central"/>
</dbReference>
<dbReference type="CDD" id="cd01663">
    <property type="entry name" value="Cyt_c_Oxidase_I"/>
    <property type="match status" value="1"/>
</dbReference>
<dbReference type="FunFam" id="1.20.210.10:FF:000001">
    <property type="entry name" value="Cytochrome c oxidase subunit 1"/>
    <property type="match status" value="1"/>
</dbReference>
<dbReference type="Gene3D" id="1.20.210.10">
    <property type="entry name" value="Cytochrome c oxidase-like, subunit I domain"/>
    <property type="match status" value="1"/>
</dbReference>
<dbReference type="InterPro" id="IPR023616">
    <property type="entry name" value="Cyt_c_oxase-like_su1_dom"/>
</dbReference>
<dbReference type="InterPro" id="IPR036927">
    <property type="entry name" value="Cyt_c_oxase-like_su1_sf"/>
</dbReference>
<dbReference type="InterPro" id="IPR000883">
    <property type="entry name" value="Cyt_C_Oxase_1"/>
</dbReference>
<dbReference type="InterPro" id="IPR023615">
    <property type="entry name" value="Cyt_c_Oxase_su1_BS"/>
</dbReference>
<dbReference type="InterPro" id="IPR033944">
    <property type="entry name" value="Cyt_c_oxase_su1_dom"/>
</dbReference>
<dbReference type="InterPro" id="IPR014241">
    <property type="entry name" value="Cyt_c_oxidase_su1_bac"/>
</dbReference>
<dbReference type="NCBIfam" id="TIGR02891">
    <property type="entry name" value="CtaD_CoxA"/>
    <property type="match status" value="1"/>
</dbReference>
<dbReference type="PANTHER" id="PTHR10422">
    <property type="entry name" value="CYTOCHROME C OXIDASE SUBUNIT 1"/>
    <property type="match status" value="1"/>
</dbReference>
<dbReference type="PANTHER" id="PTHR10422:SF18">
    <property type="entry name" value="CYTOCHROME C OXIDASE SUBUNIT 1"/>
    <property type="match status" value="1"/>
</dbReference>
<dbReference type="Pfam" id="PF00115">
    <property type="entry name" value="COX1"/>
    <property type="match status" value="1"/>
</dbReference>
<dbReference type="PRINTS" id="PR01165">
    <property type="entry name" value="CYCOXIDASEI"/>
</dbReference>
<dbReference type="SUPFAM" id="SSF81442">
    <property type="entry name" value="Cytochrome c oxidase subunit I-like"/>
    <property type="match status" value="1"/>
</dbReference>
<dbReference type="PROSITE" id="PS50855">
    <property type="entry name" value="COX1"/>
    <property type="match status" value="1"/>
</dbReference>
<dbReference type="PROSITE" id="PS00077">
    <property type="entry name" value="COX1_CUB"/>
    <property type="match status" value="1"/>
</dbReference>
<evidence type="ECO:0000250" key="1">
    <source>
        <dbReference type="UniProtKB" id="P00396"/>
    </source>
</evidence>
<evidence type="ECO:0000250" key="2">
    <source>
        <dbReference type="UniProtKB" id="P00401"/>
    </source>
</evidence>
<evidence type="ECO:0000255" key="3"/>
<evidence type="ECO:0000305" key="4"/>
<geneLocation type="mitochondrion"/>
<protein>
    <recommendedName>
        <fullName>Cytochrome c oxidase subunit 1</fullName>
        <ecNumber>7.1.1.9</ecNumber>
    </recommendedName>
    <alternativeName>
        <fullName>Cytochrome c oxidase polypeptide I</fullName>
    </alternativeName>
</protein>
<feature type="chain" id="PRO_0000183359" description="Cytochrome c oxidase subunit 1">
    <location>
        <begin position="1"/>
        <end position="528"/>
    </location>
</feature>
<feature type="transmembrane region" description="Helical" evidence="3">
    <location>
        <begin position="18"/>
        <end position="38"/>
    </location>
</feature>
<feature type="transmembrane region" description="Helical" evidence="3">
    <location>
        <begin position="66"/>
        <end position="86"/>
    </location>
</feature>
<feature type="transmembrane region" description="Helical" evidence="3">
    <location>
        <begin position="103"/>
        <end position="123"/>
    </location>
</feature>
<feature type="transmembrane region" description="Helical" evidence="3">
    <location>
        <begin position="148"/>
        <end position="168"/>
    </location>
</feature>
<feature type="transmembrane region" description="Helical" evidence="3">
    <location>
        <begin position="186"/>
        <end position="206"/>
    </location>
</feature>
<feature type="transmembrane region" description="Helical" evidence="3">
    <location>
        <begin position="237"/>
        <end position="257"/>
    </location>
</feature>
<feature type="transmembrane region" description="Helical" evidence="3">
    <location>
        <begin position="269"/>
        <end position="289"/>
    </location>
</feature>
<feature type="transmembrane region" description="Helical" evidence="3">
    <location>
        <begin position="312"/>
        <end position="332"/>
    </location>
</feature>
<feature type="transmembrane region" description="Helical" evidence="3">
    <location>
        <begin position="340"/>
        <end position="360"/>
    </location>
</feature>
<feature type="transmembrane region" description="Helical" evidence="3">
    <location>
        <begin position="379"/>
        <end position="399"/>
    </location>
</feature>
<feature type="transmembrane region" description="Helical" evidence="3">
    <location>
        <begin position="414"/>
        <end position="434"/>
    </location>
</feature>
<feature type="transmembrane region" description="Helical" evidence="3">
    <location>
        <begin position="447"/>
        <end position="467"/>
    </location>
</feature>
<feature type="binding site" evidence="2">
    <location>
        <position position="41"/>
    </location>
    <ligand>
        <name>Ca(2+)</name>
        <dbReference type="ChEBI" id="CHEBI:29108"/>
    </ligand>
</feature>
<feature type="binding site" evidence="2">
    <location>
        <position position="46"/>
    </location>
    <ligand>
        <name>Ca(2+)</name>
        <dbReference type="ChEBI" id="CHEBI:29108"/>
    </ligand>
</feature>
<feature type="binding site" description="axial binding residue" evidence="2">
    <location>
        <position position="64"/>
    </location>
    <ligand>
        <name>Fe(II)-heme a</name>
        <dbReference type="ChEBI" id="CHEBI:61715"/>
        <note>low-spin</note>
    </ligand>
    <ligandPart>
        <name>Fe</name>
        <dbReference type="ChEBI" id="CHEBI:18248"/>
    </ligandPart>
</feature>
<feature type="binding site" evidence="2">
    <location>
        <position position="243"/>
    </location>
    <ligand>
        <name>Cu cation</name>
        <dbReference type="ChEBI" id="CHEBI:23378"/>
        <label>B</label>
    </ligand>
</feature>
<feature type="binding site" evidence="1">
    <location>
        <position position="247"/>
    </location>
    <ligand>
        <name>O2</name>
        <dbReference type="ChEBI" id="CHEBI:15379"/>
    </ligand>
</feature>
<feature type="binding site" evidence="2">
    <location>
        <position position="292"/>
    </location>
    <ligand>
        <name>Cu cation</name>
        <dbReference type="ChEBI" id="CHEBI:23378"/>
        <label>B</label>
    </ligand>
</feature>
<feature type="binding site" evidence="2">
    <location>
        <position position="293"/>
    </location>
    <ligand>
        <name>Cu cation</name>
        <dbReference type="ChEBI" id="CHEBI:23378"/>
        <label>B</label>
    </ligand>
</feature>
<feature type="binding site" evidence="2">
    <location>
        <position position="370"/>
    </location>
    <ligand>
        <name>Mg(2+)</name>
        <dbReference type="ChEBI" id="CHEBI:18420"/>
        <note>ligand shared with subunit 2</note>
    </ligand>
</feature>
<feature type="binding site" evidence="2">
    <location>
        <position position="371"/>
    </location>
    <ligand>
        <name>Mg(2+)</name>
        <dbReference type="ChEBI" id="CHEBI:18420"/>
        <note>ligand shared with subunit 2</note>
    </ligand>
</feature>
<feature type="binding site" description="axial binding residue" evidence="2">
    <location>
        <position position="378"/>
    </location>
    <ligand>
        <name>heme a3</name>
        <dbReference type="ChEBI" id="CHEBI:83282"/>
        <note>high-spin</note>
    </ligand>
    <ligandPart>
        <name>Fe</name>
        <dbReference type="ChEBI" id="CHEBI:18248"/>
    </ligandPart>
</feature>
<feature type="binding site" description="axial binding residue" evidence="2">
    <location>
        <position position="380"/>
    </location>
    <ligand>
        <name>Fe(II)-heme a</name>
        <dbReference type="ChEBI" id="CHEBI:61715"/>
        <note>low-spin</note>
    </ligand>
    <ligandPart>
        <name>Fe</name>
        <dbReference type="ChEBI" id="CHEBI:18248"/>
    </ligandPart>
</feature>
<feature type="binding site" evidence="2">
    <location>
        <position position="443"/>
    </location>
    <ligand>
        <name>Ca(2+)</name>
        <dbReference type="ChEBI" id="CHEBI:29108"/>
    </ligand>
</feature>
<feature type="cross-link" description="1'-histidyl-3'-tyrosine (His-Tyr)" evidence="2">
    <location>
        <begin position="243"/>
        <end position="247"/>
    </location>
</feature>
<sequence length="528" mass="58257">MTNLVRWLFSTNHKDIGTLYFIFGAIAGVMGTCFSVLIRMELARPGDQILGGNHQLYNVLITAHAFLMIFFMVMPAMIGGFGNWFVPILIGAPDMAFPRLNNISFWLLPPSLLLLLSSALVEVGSGTGWTVYPPLSGITSHSGGAVDLAIFSLHLSGVSSILGSINFITTIFNMRGPGMTMHRLPLFVWSVLVTAFLLLLSLPVLAGAITMLLTDRNFNTTFFDPAGGGDPILYQHLFWFFGHPEVYILILPGFGIISHIVSTFSRKPVFGYLGMVYAMISIGVLGFLVWAHHMFTVGLDVDTRAYFTAATMIIAVPTGIKIFSWIATMWGGSIQYKTPMLFAVGFIFLFTIGGLTGIVLANSGLDIALHDTYYVVAHFHYVLSMGAVFALFAGFYYWVGKIFGRTYPETLGQIHFWITFFGVNLTFFPMHFLGLSGMPRRIPDYPDAYAGWNALSSFGSYISVVGIRRFFVVVAITSSSGKNKRCAESPWAVEQNPTTLEWLVQSPPAFHTFGELPTIKETRNQSSC</sequence>
<accession>P08742</accession>
<organism>
    <name type="scientific">Zea mays</name>
    <name type="common">Maize</name>
    <dbReference type="NCBI Taxonomy" id="4577"/>
    <lineage>
        <taxon>Eukaryota</taxon>
        <taxon>Viridiplantae</taxon>
        <taxon>Streptophyta</taxon>
        <taxon>Embryophyta</taxon>
        <taxon>Tracheophyta</taxon>
        <taxon>Spermatophyta</taxon>
        <taxon>Magnoliopsida</taxon>
        <taxon>Liliopsida</taxon>
        <taxon>Poales</taxon>
        <taxon>Poaceae</taxon>
        <taxon>PACMAD clade</taxon>
        <taxon>Panicoideae</taxon>
        <taxon>Andropogonodae</taxon>
        <taxon>Andropogoneae</taxon>
        <taxon>Tripsacinae</taxon>
        <taxon>Zea</taxon>
    </lineage>
</organism>
<keyword id="KW-0106">Calcium</keyword>
<keyword id="KW-0186">Copper</keyword>
<keyword id="KW-0249">Electron transport</keyword>
<keyword id="KW-0349">Heme</keyword>
<keyword id="KW-0408">Iron</keyword>
<keyword id="KW-0460">Magnesium</keyword>
<keyword id="KW-0472">Membrane</keyword>
<keyword id="KW-0479">Metal-binding</keyword>
<keyword id="KW-0496">Mitochondrion</keyword>
<keyword id="KW-0999">Mitochondrion inner membrane</keyword>
<keyword id="KW-0679">Respiratory chain</keyword>
<keyword id="KW-1278">Translocase</keyword>
<keyword id="KW-0812">Transmembrane</keyword>
<keyword id="KW-1133">Transmembrane helix</keyword>
<keyword id="KW-0813">Transport</keyword>
<gene>
    <name type="primary">COX1</name>
    <name type="synonym">COXI</name>
</gene>